<feature type="chain" id="PRO_1000144904" description="Putative iron-sulfur cluster insertion protein ErpA">
    <location>
        <begin position="1"/>
        <end position="122"/>
    </location>
</feature>
<feature type="binding site" evidence="1">
    <location>
        <position position="50"/>
    </location>
    <ligand>
        <name>iron-sulfur cluster</name>
        <dbReference type="ChEBI" id="CHEBI:30408"/>
    </ligand>
</feature>
<feature type="binding site" evidence="1">
    <location>
        <position position="114"/>
    </location>
    <ligand>
        <name>iron-sulfur cluster</name>
        <dbReference type="ChEBI" id="CHEBI:30408"/>
    </ligand>
</feature>
<feature type="binding site" evidence="1">
    <location>
        <position position="116"/>
    </location>
    <ligand>
        <name>iron-sulfur cluster</name>
        <dbReference type="ChEBI" id="CHEBI:30408"/>
    </ligand>
</feature>
<name>ERPA_CUPTR</name>
<protein>
    <recommendedName>
        <fullName evidence="1">Putative iron-sulfur cluster insertion protein ErpA</fullName>
    </recommendedName>
</protein>
<sequence>MNAVAEAPVTEDVPAPFVFTDSAADKVKQLIEEEGNAELKLRVFVQGGGCSGFQYGFTFDEEVNEDDTTMVKNGVTLLIDSMSYQYLVGAEIDYKEDINGAQFVIKNPNASTTCGCGSSFSV</sequence>
<keyword id="KW-0408">Iron</keyword>
<keyword id="KW-0411">Iron-sulfur</keyword>
<keyword id="KW-0479">Metal-binding</keyword>
<proteinExistence type="inferred from homology"/>
<accession>B2AH60</accession>
<organism>
    <name type="scientific">Cupriavidus taiwanensis (strain DSM 17343 / BCRC 17206 / CCUG 44338 / CIP 107171 / LMG 19424 / R1)</name>
    <name type="common">Ralstonia taiwanensis (strain LMG 19424)</name>
    <dbReference type="NCBI Taxonomy" id="977880"/>
    <lineage>
        <taxon>Bacteria</taxon>
        <taxon>Pseudomonadati</taxon>
        <taxon>Pseudomonadota</taxon>
        <taxon>Betaproteobacteria</taxon>
        <taxon>Burkholderiales</taxon>
        <taxon>Burkholderiaceae</taxon>
        <taxon>Cupriavidus</taxon>
    </lineage>
</organism>
<comment type="function">
    <text evidence="1">Required for insertion of 4Fe-4S clusters.</text>
</comment>
<comment type="cofactor">
    <cofactor evidence="1">
        <name>iron-sulfur cluster</name>
        <dbReference type="ChEBI" id="CHEBI:30408"/>
    </cofactor>
    <text evidence="1">Binds 1 iron-sulfur cluster per subunit.</text>
</comment>
<comment type="subunit">
    <text evidence="1">Homodimer.</text>
</comment>
<comment type="similarity">
    <text evidence="1">Belongs to the HesB/IscA family.</text>
</comment>
<dbReference type="EMBL" id="CU633749">
    <property type="protein sequence ID" value="CAP63109.1"/>
    <property type="molecule type" value="Genomic_DNA"/>
</dbReference>
<dbReference type="RefSeq" id="WP_010813904.1">
    <property type="nucleotide sequence ID" value="NC_010528.1"/>
</dbReference>
<dbReference type="SMR" id="B2AH60"/>
<dbReference type="GeneID" id="34308165"/>
<dbReference type="KEGG" id="cti:RALTA_A0441"/>
<dbReference type="eggNOG" id="COG0316">
    <property type="taxonomic scope" value="Bacteria"/>
</dbReference>
<dbReference type="HOGENOM" id="CLU_069054_5_3_4"/>
<dbReference type="BioCyc" id="CTAI977880:RALTA_RS02155-MONOMER"/>
<dbReference type="Proteomes" id="UP000001692">
    <property type="component" value="Chromosome 1"/>
</dbReference>
<dbReference type="GO" id="GO:0051537">
    <property type="term" value="F:2 iron, 2 sulfur cluster binding"/>
    <property type="evidence" value="ECO:0007669"/>
    <property type="project" value="TreeGrafter"/>
</dbReference>
<dbReference type="GO" id="GO:0051539">
    <property type="term" value="F:4 iron, 4 sulfur cluster binding"/>
    <property type="evidence" value="ECO:0007669"/>
    <property type="project" value="TreeGrafter"/>
</dbReference>
<dbReference type="GO" id="GO:0005506">
    <property type="term" value="F:iron ion binding"/>
    <property type="evidence" value="ECO:0007669"/>
    <property type="project" value="UniProtKB-UniRule"/>
</dbReference>
<dbReference type="GO" id="GO:0016226">
    <property type="term" value="P:iron-sulfur cluster assembly"/>
    <property type="evidence" value="ECO:0007669"/>
    <property type="project" value="UniProtKB-UniRule"/>
</dbReference>
<dbReference type="FunFam" id="2.60.300.12:FF:000002">
    <property type="entry name" value="Iron-sulfur cluster insertion protein ErpA"/>
    <property type="match status" value="1"/>
</dbReference>
<dbReference type="Gene3D" id="2.60.300.12">
    <property type="entry name" value="HesB-like domain"/>
    <property type="match status" value="1"/>
</dbReference>
<dbReference type="HAMAP" id="MF_01380">
    <property type="entry name" value="Fe_S_insert_ErpA"/>
    <property type="match status" value="1"/>
</dbReference>
<dbReference type="InterPro" id="IPR000361">
    <property type="entry name" value="FeS_biogenesis"/>
</dbReference>
<dbReference type="InterPro" id="IPR016092">
    <property type="entry name" value="FeS_cluster_insertion"/>
</dbReference>
<dbReference type="InterPro" id="IPR017870">
    <property type="entry name" value="FeS_cluster_insertion_CS"/>
</dbReference>
<dbReference type="InterPro" id="IPR023063">
    <property type="entry name" value="FeS_cluster_insertion_RrpA"/>
</dbReference>
<dbReference type="InterPro" id="IPR035903">
    <property type="entry name" value="HesB-like_dom_sf"/>
</dbReference>
<dbReference type="NCBIfam" id="TIGR00049">
    <property type="entry name" value="iron-sulfur cluster assembly accessory protein"/>
    <property type="match status" value="1"/>
</dbReference>
<dbReference type="NCBIfam" id="NF010147">
    <property type="entry name" value="PRK13623.1"/>
    <property type="match status" value="1"/>
</dbReference>
<dbReference type="PANTHER" id="PTHR43011">
    <property type="entry name" value="IRON-SULFUR CLUSTER ASSEMBLY 2 HOMOLOG, MITOCHONDRIAL"/>
    <property type="match status" value="1"/>
</dbReference>
<dbReference type="PANTHER" id="PTHR43011:SF1">
    <property type="entry name" value="IRON-SULFUR CLUSTER ASSEMBLY 2 HOMOLOG, MITOCHONDRIAL"/>
    <property type="match status" value="1"/>
</dbReference>
<dbReference type="Pfam" id="PF01521">
    <property type="entry name" value="Fe-S_biosyn"/>
    <property type="match status" value="1"/>
</dbReference>
<dbReference type="SUPFAM" id="SSF89360">
    <property type="entry name" value="HesB-like domain"/>
    <property type="match status" value="1"/>
</dbReference>
<dbReference type="PROSITE" id="PS01152">
    <property type="entry name" value="HESB"/>
    <property type="match status" value="1"/>
</dbReference>
<reference key="1">
    <citation type="journal article" date="2008" name="Genome Res.">
        <title>Genome sequence of the beta-rhizobium Cupriavidus taiwanensis and comparative genomics of rhizobia.</title>
        <authorList>
            <person name="Amadou C."/>
            <person name="Pascal G."/>
            <person name="Mangenot S."/>
            <person name="Glew M."/>
            <person name="Bontemps C."/>
            <person name="Capela D."/>
            <person name="Carrere S."/>
            <person name="Cruveiller S."/>
            <person name="Dossat C."/>
            <person name="Lajus A."/>
            <person name="Marchetti M."/>
            <person name="Poinsot V."/>
            <person name="Rouy Z."/>
            <person name="Servin B."/>
            <person name="Saad M."/>
            <person name="Schenowitz C."/>
            <person name="Barbe V."/>
            <person name="Batut J."/>
            <person name="Medigue C."/>
            <person name="Masson-Boivin C."/>
        </authorList>
    </citation>
    <scope>NUCLEOTIDE SEQUENCE [LARGE SCALE GENOMIC DNA]</scope>
    <source>
        <strain>DSM 17343 / BCRC 17206 / CCUG 44338 / CIP 107171 / LMG 19424 / R1</strain>
    </source>
</reference>
<evidence type="ECO:0000255" key="1">
    <source>
        <dbReference type="HAMAP-Rule" id="MF_01380"/>
    </source>
</evidence>
<gene>
    <name evidence="1" type="primary">erpA</name>
    <name type="ordered locus">RALTA_A0441</name>
</gene>